<accession>Q5T160</accession>
<accession>B2RDT7</accession>
<accession>Q96FU5</accession>
<accession>Q9H8K8</accession>
<organism>
    <name type="scientific">Homo sapiens</name>
    <name type="common">Human</name>
    <dbReference type="NCBI Taxonomy" id="9606"/>
    <lineage>
        <taxon>Eukaryota</taxon>
        <taxon>Metazoa</taxon>
        <taxon>Chordata</taxon>
        <taxon>Craniata</taxon>
        <taxon>Vertebrata</taxon>
        <taxon>Euteleostomi</taxon>
        <taxon>Mammalia</taxon>
        <taxon>Eutheria</taxon>
        <taxon>Euarchontoglires</taxon>
        <taxon>Primates</taxon>
        <taxon>Haplorrhini</taxon>
        <taxon>Catarrhini</taxon>
        <taxon>Hominidae</taxon>
        <taxon>Homo</taxon>
    </lineage>
</organism>
<keyword id="KW-0007">Acetylation</keyword>
<keyword id="KW-0030">Aminoacyl-tRNA synthetase</keyword>
<keyword id="KW-0067">ATP-binding</keyword>
<keyword id="KW-0225">Disease variant</keyword>
<keyword id="KW-0436">Ligase</keyword>
<keyword id="KW-0472">Membrane</keyword>
<keyword id="KW-0496">Mitochondrion</keyword>
<keyword id="KW-0523">Neurodegeneration</keyword>
<keyword id="KW-0547">Nucleotide-binding</keyword>
<keyword id="KW-1021">Pontocerebellar hypoplasia</keyword>
<keyword id="KW-0648">Protein biosynthesis</keyword>
<keyword id="KW-1267">Proteomics identification</keyword>
<keyword id="KW-1185">Reference proteome</keyword>
<keyword id="KW-0809">Transit peptide</keyword>
<gene>
    <name type="primary">RARS2</name>
    <name type="synonym">RARSL</name>
</gene>
<protein>
    <recommendedName>
        <fullName>Probable arginine--tRNA ligase, mitochondrial</fullName>
        <ecNumber evidence="6">6.1.1.19</ecNumber>
    </recommendedName>
    <alternativeName>
        <fullName>Arginyl-tRNA synthetase</fullName>
        <shortName>ArgRS</shortName>
    </alternativeName>
</protein>
<reference key="1">
    <citation type="journal article" date="2004" name="Nat. Genet.">
        <title>Complete sequencing and characterization of 21,243 full-length human cDNAs.</title>
        <authorList>
            <person name="Ota T."/>
            <person name="Suzuki Y."/>
            <person name="Nishikawa T."/>
            <person name="Otsuki T."/>
            <person name="Sugiyama T."/>
            <person name="Irie R."/>
            <person name="Wakamatsu A."/>
            <person name="Hayashi K."/>
            <person name="Sato H."/>
            <person name="Nagai K."/>
            <person name="Kimura K."/>
            <person name="Makita H."/>
            <person name="Sekine M."/>
            <person name="Obayashi M."/>
            <person name="Nishi T."/>
            <person name="Shibahara T."/>
            <person name="Tanaka T."/>
            <person name="Ishii S."/>
            <person name="Yamamoto J."/>
            <person name="Saito K."/>
            <person name="Kawai Y."/>
            <person name="Isono Y."/>
            <person name="Nakamura Y."/>
            <person name="Nagahari K."/>
            <person name="Murakami K."/>
            <person name="Yasuda T."/>
            <person name="Iwayanagi T."/>
            <person name="Wagatsuma M."/>
            <person name="Shiratori A."/>
            <person name="Sudo H."/>
            <person name="Hosoiri T."/>
            <person name="Kaku Y."/>
            <person name="Kodaira H."/>
            <person name="Kondo H."/>
            <person name="Sugawara M."/>
            <person name="Takahashi M."/>
            <person name="Kanda K."/>
            <person name="Yokoi T."/>
            <person name="Furuya T."/>
            <person name="Kikkawa E."/>
            <person name="Omura Y."/>
            <person name="Abe K."/>
            <person name="Kamihara K."/>
            <person name="Katsuta N."/>
            <person name="Sato K."/>
            <person name="Tanikawa M."/>
            <person name="Yamazaki M."/>
            <person name="Ninomiya K."/>
            <person name="Ishibashi T."/>
            <person name="Yamashita H."/>
            <person name="Murakawa K."/>
            <person name="Fujimori K."/>
            <person name="Tanai H."/>
            <person name="Kimata M."/>
            <person name="Watanabe M."/>
            <person name="Hiraoka S."/>
            <person name="Chiba Y."/>
            <person name="Ishida S."/>
            <person name="Ono Y."/>
            <person name="Takiguchi S."/>
            <person name="Watanabe S."/>
            <person name="Yosida M."/>
            <person name="Hotuta T."/>
            <person name="Kusano J."/>
            <person name="Kanehori K."/>
            <person name="Takahashi-Fujii A."/>
            <person name="Hara H."/>
            <person name="Tanase T.-O."/>
            <person name="Nomura Y."/>
            <person name="Togiya S."/>
            <person name="Komai F."/>
            <person name="Hara R."/>
            <person name="Takeuchi K."/>
            <person name="Arita M."/>
            <person name="Imose N."/>
            <person name="Musashino K."/>
            <person name="Yuuki H."/>
            <person name="Oshima A."/>
            <person name="Sasaki N."/>
            <person name="Aotsuka S."/>
            <person name="Yoshikawa Y."/>
            <person name="Matsunawa H."/>
            <person name="Ichihara T."/>
            <person name="Shiohata N."/>
            <person name="Sano S."/>
            <person name="Moriya S."/>
            <person name="Momiyama H."/>
            <person name="Satoh N."/>
            <person name="Takami S."/>
            <person name="Terashima Y."/>
            <person name="Suzuki O."/>
            <person name="Nakagawa S."/>
            <person name="Senoh A."/>
            <person name="Mizoguchi H."/>
            <person name="Goto Y."/>
            <person name="Shimizu F."/>
            <person name="Wakebe H."/>
            <person name="Hishigaki H."/>
            <person name="Watanabe T."/>
            <person name="Sugiyama A."/>
            <person name="Takemoto M."/>
            <person name="Kawakami B."/>
            <person name="Yamazaki M."/>
            <person name="Watanabe K."/>
            <person name="Kumagai A."/>
            <person name="Itakura S."/>
            <person name="Fukuzumi Y."/>
            <person name="Fujimori Y."/>
            <person name="Komiyama M."/>
            <person name="Tashiro H."/>
            <person name="Tanigami A."/>
            <person name="Fujiwara T."/>
            <person name="Ono T."/>
            <person name="Yamada K."/>
            <person name="Fujii Y."/>
            <person name="Ozaki K."/>
            <person name="Hirao M."/>
            <person name="Ohmori Y."/>
            <person name="Kawabata A."/>
            <person name="Hikiji T."/>
            <person name="Kobatake N."/>
            <person name="Inagaki H."/>
            <person name="Ikema Y."/>
            <person name="Okamoto S."/>
            <person name="Okitani R."/>
            <person name="Kawakami T."/>
            <person name="Noguchi S."/>
            <person name="Itoh T."/>
            <person name="Shigeta K."/>
            <person name="Senba T."/>
            <person name="Matsumura K."/>
            <person name="Nakajima Y."/>
            <person name="Mizuno T."/>
            <person name="Morinaga M."/>
            <person name="Sasaki M."/>
            <person name="Togashi T."/>
            <person name="Oyama M."/>
            <person name="Hata H."/>
            <person name="Watanabe M."/>
            <person name="Komatsu T."/>
            <person name="Mizushima-Sugano J."/>
            <person name="Satoh T."/>
            <person name="Shirai Y."/>
            <person name="Takahashi Y."/>
            <person name="Nakagawa K."/>
            <person name="Okumura K."/>
            <person name="Nagase T."/>
            <person name="Nomura N."/>
            <person name="Kikuchi H."/>
            <person name="Masuho Y."/>
            <person name="Yamashita R."/>
            <person name="Nakai K."/>
            <person name="Yada T."/>
            <person name="Nakamura Y."/>
            <person name="Ohara O."/>
            <person name="Isogai T."/>
            <person name="Sugano S."/>
        </authorList>
    </citation>
    <scope>NUCLEOTIDE SEQUENCE [LARGE SCALE MRNA]</scope>
    <scope>VARIANT VAL-331</scope>
    <source>
        <tissue>Placenta</tissue>
        <tissue>Testis</tissue>
    </source>
</reference>
<reference key="2">
    <citation type="journal article" date="2003" name="Nature">
        <title>The DNA sequence and analysis of human chromosome 6.</title>
        <authorList>
            <person name="Mungall A.J."/>
            <person name="Palmer S.A."/>
            <person name="Sims S.K."/>
            <person name="Edwards C.A."/>
            <person name="Ashurst J.L."/>
            <person name="Wilming L."/>
            <person name="Jones M.C."/>
            <person name="Horton R."/>
            <person name="Hunt S.E."/>
            <person name="Scott C.E."/>
            <person name="Gilbert J.G.R."/>
            <person name="Clamp M.E."/>
            <person name="Bethel G."/>
            <person name="Milne S."/>
            <person name="Ainscough R."/>
            <person name="Almeida J.P."/>
            <person name="Ambrose K.D."/>
            <person name="Andrews T.D."/>
            <person name="Ashwell R.I.S."/>
            <person name="Babbage A.K."/>
            <person name="Bagguley C.L."/>
            <person name="Bailey J."/>
            <person name="Banerjee R."/>
            <person name="Barker D.J."/>
            <person name="Barlow K.F."/>
            <person name="Bates K."/>
            <person name="Beare D.M."/>
            <person name="Beasley H."/>
            <person name="Beasley O."/>
            <person name="Bird C.P."/>
            <person name="Blakey S.E."/>
            <person name="Bray-Allen S."/>
            <person name="Brook J."/>
            <person name="Brown A.J."/>
            <person name="Brown J.Y."/>
            <person name="Burford D.C."/>
            <person name="Burrill W."/>
            <person name="Burton J."/>
            <person name="Carder C."/>
            <person name="Carter N.P."/>
            <person name="Chapman J.C."/>
            <person name="Clark S.Y."/>
            <person name="Clark G."/>
            <person name="Clee C.M."/>
            <person name="Clegg S."/>
            <person name="Cobley V."/>
            <person name="Collier R.E."/>
            <person name="Collins J.E."/>
            <person name="Colman L.K."/>
            <person name="Corby N.R."/>
            <person name="Coville G.J."/>
            <person name="Culley K.M."/>
            <person name="Dhami P."/>
            <person name="Davies J."/>
            <person name="Dunn M."/>
            <person name="Earthrowl M.E."/>
            <person name="Ellington A.E."/>
            <person name="Evans K.A."/>
            <person name="Faulkner L."/>
            <person name="Francis M.D."/>
            <person name="Frankish A."/>
            <person name="Frankland J."/>
            <person name="French L."/>
            <person name="Garner P."/>
            <person name="Garnett J."/>
            <person name="Ghori M.J."/>
            <person name="Gilby L.M."/>
            <person name="Gillson C.J."/>
            <person name="Glithero R.J."/>
            <person name="Grafham D.V."/>
            <person name="Grant M."/>
            <person name="Gribble S."/>
            <person name="Griffiths C."/>
            <person name="Griffiths M.N.D."/>
            <person name="Hall R."/>
            <person name="Halls K.S."/>
            <person name="Hammond S."/>
            <person name="Harley J.L."/>
            <person name="Hart E.A."/>
            <person name="Heath P.D."/>
            <person name="Heathcott R."/>
            <person name="Holmes S.J."/>
            <person name="Howden P.J."/>
            <person name="Howe K.L."/>
            <person name="Howell G.R."/>
            <person name="Huckle E."/>
            <person name="Humphray S.J."/>
            <person name="Humphries M.D."/>
            <person name="Hunt A.R."/>
            <person name="Johnson C.M."/>
            <person name="Joy A.A."/>
            <person name="Kay M."/>
            <person name="Keenan S.J."/>
            <person name="Kimberley A.M."/>
            <person name="King A."/>
            <person name="Laird G.K."/>
            <person name="Langford C."/>
            <person name="Lawlor S."/>
            <person name="Leongamornlert D.A."/>
            <person name="Leversha M."/>
            <person name="Lloyd C.R."/>
            <person name="Lloyd D.M."/>
            <person name="Loveland J.E."/>
            <person name="Lovell J."/>
            <person name="Martin S."/>
            <person name="Mashreghi-Mohammadi M."/>
            <person name="Maslen G.L."/>
            <person name="Matthews L."/>
            <person name="McCann O.T."/>
            <person name="McLaren S.J."/>
            <person name="McLay K."/>
            <person name="McMurray A."/>
            <person name="Moore M.J.F."/>
            <person name="Mullikin J.C."/>
            <person name="Niblett D."/>
            <person name="Nickerson T."/>
            <person name="Novik K.L."/>
            <person name="Oliver K."/>
            <person name="Overton-Larty E.K."/>
            <person name="Parker A."/>
            <person name="Patel R."/>
            <person name="Pearce A.V."/>
            <person name="Peck A.I."/>
            <person name="Phillimore B.J.C.T."/>
            <person name="Phillips S."/>
            <person name="Plumb R.W."/>
            <person name="Porter K.M."/>
            <person name="Ramsey Y."/>
            <person name="Ranby S.A."/>
            <person name="Rice C.M."/>
            <person name="Ross M.T."/>
            <person name="Searle S.M."/>
            <person name="Sehra H.K."/>
            <person name="Sheridan E."/>
            <person name="Skuce C.D."/>
            <person name="Smith S."/>
            <person name="Smith M."/>
            <person name="Spraggon L."/>
            <person name="Squares S.L."/>
            <person name="Steward C.A."/>
            <person name="Sycamore N."/>
            <person name="Tamlyn-Hall G."/>
            <person name="Tester J."/>
            <person name="Theaker A.J."/>
            <person name="Thomas D.W."/>
            <person name="Thorpe A."/>
            <person name="Tracey A."/>
            <person name="Tromans A."/>
            <person name="Tubby B."/>
            <person name="Wall M."/>
            <person name="Wallis J.M."/>
            <person name="West A.P."/>
            <person name="White S.S."/>
            <person name="Whitehead S.L."/>
            <person name="Whittaker H."/>
            <person name="Wild A."/>
            <person name="Willey D.J."/>
            <person name="Wilmer T.E."/>
            <person name="Wood J.M."/>
            <person name="Wray P.W."/>
            <person name="Wyatt J.C."/>
            <person name="Young L."/>
            <person name="Younger R.M."/>
            <person name="Bentley D.R."/>
            <person name="Coulson A."/>
            <person name="Durbin R.M."/>
            <person name="Hubbard T."/>
            <person name="Sulston J.E."/>
            <person name="Dunham I."/>
            <person name="Rogers J."/>
            <person name="Beck S."/>
        </authorList>
    </citation>
    <scope>NUCLEOTIDE SEQUENCE [LARGE SCALE GENOMIC DNA]</scope>
</reference>
<reference key="3">
    <citation type="submission" date="2005-09" db="EMBL/GenBank/DDBJ databases">
        <authorList>
            <person name="Mural R.J."/>
            <person name="Istrail S."/>
            <person name="Sutton G.G."/>
            <person name="Florea L."/>
            <person name="Halpern A.L."/>
            <person name="Mobarry C.M."/>
            <person name="Lippert R."/>
            <person name="Walenz B."/>
            <person name="Shatkay H."/>
            <person name="Dew I."/>
            <person name="Miller J.R."/>
            <person name="Flanigan M.J."/>
            <person name="Edwards N.J."/>
            <person name="Bolanos R."/>
            <person name="Fasulo D."/>
            <person name="Halldorsson B.V."/>
            <person name="Hannenhalli S."/>
            <person name="Turner R."/>
            <person name="Yooseph S."/>
            <person name="Lu F."/>
            <person name="Nusskern D.R."/>
            <person name="Shue B.C."/>
            <person name="Zheng X.H."/>
            <person name="Zhong F."/>
            <person name="Delcher A.L."/>
            <person name="Huson D.H."/>
            <person name="Kravitz S.A."/>
            <person name="Mouchard L."/>
            <person name="Reinert K."/>
            <person name="Remington K.A."/>
            <person name="Clark A.G."/>
            <person name="Waterman M.S."/>
            <person name="Eichler E.E."/>
            <person name="Adams M.D."/>
            <person name="Hunkapiller M.W."/>
            <person name="Myers E.W."/>
            <person name="Venter J.C."/>
        </authorList>
    </citation>
    <scope>NUCLEOTIDE SEQUENCE [LARGE SCALE GENOMIC DNA]</scope>
</reference>
<reference key="4">
    <citation type="journal article" date="2004" name="Genome Res.">
        <title>The status, quality, and expansion of the NIH full-length cDNA project: the Mammalian Gene Collection (MGC).</title>
        <authorList>
            <consortium name="The MGC Project Team"/>
        </authorList>
    </citation>
    <scope>NUCLEOTIDE SEQUENCE [LARGE SCALE MRNA]</scope>
    <scope>VARIANT ARG-291</scope>
    <source>
        <tissue>Uterus</tissue>
    </source>
</reference>
<reference key="5">
    <citation type="journal article" date="2005" name="Biochemistry">
        <title>Toward the full set of human mitochondrial aminoacyl-tRNA synthetases: characterization of AspRS and TyrRS.</title>
        <authorList>
            <person name="Bonnefond L."/>
            <person name="Fender A."/>
            <person name="Rudinger-Thirion J."/>
            <person name="Giege R."/>
            <person name="Florentz C."/>
            <person name="Sissler M."/>
        </authorList>
    </citation>
    <scope>IDENTIFICATION</scope>
</reference>
<reference key="6">
    <citation type="journal article" date="2007" name="Am. J. Hum. Genet.">
        <title>Deleterious mutation in the mitochondrial arginyl-transfer RNA synthetase gene is associated with pontocerebellar hypoplasia.</title>
        <authorList>
            <person name="Edvardson S."/>
            <person name="Shaag A."/>
            <person name="Kolesnikova O."/>
            <person name="Gomori J.M."/>
            <person name="Tarassov I."/>
            <person name="Einbinder T."/>
            <person name="Saada A."/>
            <person name="Elpeleg O."/>
        </authorList>
    </citation>
    <scope>INVOLVEMENT IN PCH6</scope>
    <scope>FUNCTION</scope>
    <scope>CATALYTIC ACTIVITY</scope>
</reference>
<reference key="7">
    <citation type="journal article" date="2011" name="BMC Syst. Biol.">
        <title>Initial characterization of the human central proteome.</title>
        <authorList>
            <person name="Burkard T.R."/>
            <person name="Planyavsky M."/>
            <person name="Kaupe I."/>
            <person name="Breitwieser F.P."/>
            <person name="Buerckstuemmer T."/>
            <person name="Bennett K.L."/>
            <person name="Superti-Furga G."/>
            <person name="Colinge J."/>
        </authorList>
    </citation>
    <scope>IDENTIFICATION BY MASS SPECTROMETRY [LARGE SCALE ANALYSIS]</scope>
</reference>
<reference key="8">
    <citation type="journal article" date="2015" name="Proteomics">
        <title>N-terminome analysis of the human mitochondrial proteome.</title>
        <authorList>
            <person name="Vaca Jacome A.S."/>
            <person name="Rabilloud T."/>
            <person name="Schaeffer-Reiss C."/>
            <person name="Rompais M."/>
            <person name="Ayoub D."/>
            <person name="Lane L."/>
            <person name="Bairoch A."/>
            <person name="Van Dorsselaer A."/>
            <person name="Carapito C."/>
        </authorList>
    </citation>
    <scope>IDENTIFICATION BY MASS SPECTROMETRY [LARGE SCALE ANALYSIS]</scope>
</reference>
<reference key="9">
    <citation type="journal article" date="2016" name="PLoS Genet.">
        <title>A comprehensive genomic analysis reveals the genetic landscape of mitochondrial respiratory chain complex deficiencies.</title>
        <authorList>
            <person name="Kohda M."/>
            <person name="Tokuzawa Y."/>
            <person name="Kishita Y."/>
            <person name="Nyuzuki H."/>
            <person name="Moriyama Y."/>
            <person name="Mizuno Y."/>
            <person name="Hirata T."/>
            <person name="Yatsuka Y."/>
            <person name="Yamashita-Sugahara Y."/>
            <person name="Nakachi Y."/>
            <person name="Kato H."/>
            <person name="Okuda A."/>
            <person name="Tamaru S."/>
            <person name="Borna N.N."/>
            <person name="Banshoya K."/>
            <person name="Aigaki T."/>
            <person name="Sato-Miyata Y."/>
            <person name="Ohnuma K."/>
            <person name="Suzuki T."/>
            <person name="Nagao A."/>
            <person name="Maehata H."/>
            <person name="Matsuda F."/>
            <person name="Higasa K."/>
            <person name="Nagasaki M."/>
            <person name="Yasuda J."/>
            <person name="Yamamoto M."/>
            <person name="Fushimi T."/>
            <person name="Shimura M."/>
            <person name="Kaiho-Ichimoto K."/>
            <person name="Harashima H."/>
            <person name="Yamazaki T."/>
            <person name="Mori M."/>
            <person name="Murayama K."/>
            <person name="Ohtake A."/>
            <person name="Okazaki Y."/>
        </authorList>
    </citation>
    <scope>VARIANTS TYR-436 AND PHE-441</scope>
</reference>
<reference key="10">
    <citation type="journal article" date="2018" name="J. Biol. Chem.">
        <title>Three human aminoacyl-tRNA synthetases have distinct sub-mitochondrial localizations that are unaffected by disease-associated mutations.</title>
        <authorList>
            <person name="Gonzalez-Serrano L.E."/>
            <person name="Karim L."/>
            <person name="Pierre F."/>
            <person name="Schwenzer H."/>
            <person name="Roetig A."/>
            <person name="Munnich A."/>
            <person name="Sissler M."/>
        </authorList>
    </citation>
    <scope>VARIANT PCH6 VAL-10</scope>
    <scope>MUTAGENESIS OF ILE-9; GLN-12; TRP-241; ARG-245; ARG-258; LEU-283; ARG-333; MET-342; MET-404; ARG-469; GLY-478 AND HIS-530</scope>
    <scope>SUBCELLULAR LOCATION</scope>
</reference>
<reference key="11">
    <citation type="journal article" date="2021" name="Am. J. Hum. Genet.">
        <title>Progressive myoclonus epilepsies-Residual unsolved cases have marked genetic heterogeneity including dolichol-dependent protein glycosylation pathway genes.</title>
        <authorList>
            <person name="Courage C."/>
            <person name="Oliver K.L."/>
            <person name="Park E.J."/>
            <person name="Cameron J.M."/>
            <person name="Grabinska K.A."/>
            <person name="Muona M."/>
            <person name="Canafoglia L."/>
            <person name="Gambardella A."/>
            <person name="Said E."/>
            <person name="Afawi Z."/>
            <person name="Baykan B."/>
            <person name="Brandt C."/>
            <person name="di Bonaventura C."/>
            <person name="Chew H.B."/>
            <person name="Criscuolo C."/>
            <person name="Dibbens L.M."/>
            <person name="Castellotti B."/>
            <person name="Riguzzi P."/>
            <person name="Labate A."/>
            <person name="Filla A."/>
            <person name="Giallonardo A.T."/>
            <person name="Berecki G."/>
            <person name="Jackson C.B."/>
            <person name="Joensuu T."/>
            <person name="Damiano J.A."/>
            <person name="Kivity S."/>
            <person name="Korczyn A."/>
            <person name="Palotie A."/>
            <person name="Striano P."/>
            <person name="Uccellini D."/>
            <person name="Giuliano L."/>
            <person name="Andermann E."/>
            <person name="Scheffer I.E."/>
            <person name="Michelucci R."/>
            <person name="Bahlo M."/>
            <person name="Franceschetti S."/>
            <person name="Sessa W.C."/>
            <person name="Berkovic S.F."/>
            <person name="Lehesjoki A.E."/>
        </authorList>
    </citation>
    <scope>VARIANTS ALA-142; 315-ARG--MET-578 DEL AND ILE-342</scope>
</reference>
<evidence type="ECO:0000250" key="1">
    <source>
        <dbReference type="UniProtKB" id="P54136"/>
    </source>
</evidence>
<evidence type="ECO:0000250" key="2">
    <source>
        <dbReference type="UniProtKB" id="Q3U186"/>
    </source>
</evidence>
<evidence type="ECO:0000255" key="3"/>
<evidence type="ECO:0000269" key="4">
    <source>
    </source>
</evidence>
<evidence type="ECO:0000269" key="5">
    <source>
    </source>
</evidence>
<evidence type="ECO:0000269" key="6">
    <source>
    </source>
</evidence>
<evidence type="ECO:0000269" key="7">
    <source>
    </source>
</evidence>
<evidence type="ECO:0000269" key="8">
    <source>
    </source>
</evidence>
<evidence type="ECO:0000269" key="9">
    <source>
    </source>
</evidence>
<evidence type="ECO:0000305" key="10"/>
<proteinExistence type="evidence at protein level"/>
<comment type="function">
    <text evidence="6">Catalyzes the attachment of arginine to tRNA(Arg) in a two-step reaction: arginine is first activated by ATP to form Arg-AMP and then transferred to the acceptor end of tRNA(Arg).</text>
</comment>
<comment type="catalytic activity">
    <reaction evidence="6">
        <text>tRNA(Arg) + L-arginine + ATP = L-arginyl-tRNA(Arg) + AMP + diphosphate</text>
        <dbReference type="Rhea" id="RHEA:20301"/>
        <dbReference type="Rhea" id="RHEA-COMP:9658"/>
        <dbReference type="Rhea" id="RHEA-COMP:9673"/>
        <dbReference type="ChEBI" id="CHEBI:30616"/>
        <dbReference type="ChEBI" id="CHEBI:32682"/>
        <dbReference type="ChEBI" id="CHEBI:33019"/>
        <dbReference type="ChEBI" id="CHEBI:78442"/>
        <dbReference type="ChEBI" id="CHEBI:78513"/>
        <dbReference type="ChEBI" id="CHEBI:456215"/>
        <dbReference type="EC" id="6.1.1.19"/>
    </reaction>
</comment>
<comment type="interaction">
    <interactant intactId="EBI-1050546">
        <id>Q5T160</id>
    </interactant>
    <interactant intactId="EBI-10200977">
        <id>P21964-2</id>
        <label>COMT</label>
    </interactant>
    <organismsDiffer>false</organismsDiffer>
    <experiments>3</experiments>
</comment>
<comment type="interaction">
    <interactant intactId="EBI-1050546">
        <id>Q5T160</id>
    </interactant>
    <interactant intactId="EBI-25842075">
        <id>P21980-2</id>
        <label>TGM2</label>
    </interactant>
    <organismsDiffer>false</organismsDiffer>
    <experiments>3</experiments>
</comment>
<comment type="subcellular location">
    <subcellularLocation>
        <location evidence="8">Mitochondrion membrane</location>
    </subcellularLocation>
</comment>
<comment type="disease" evidence="6 8">
    <disease id="DI-02180">
        <name>Pontocerebellar hypoplasia 6</name>
        <acronym>PCH6</acronym>
        <description>A disorder characterized by an abnormally small cerebellum and brainstem, infantile encephalopathy, generalized hypotonia, lethargy and poor feeding. Recurrent apnea, intractable seizures occur early in the course of this condition.</description>
        <dbReference type="MIM" id="611523"/>
    </disease>
    <text>The disease is caused by variants affecting the gene represented in this entry.</text>
</comment>
<comment type="similarity">
    <text evidence="10">Belongs to the class-I aminoacyl-tRNA synthetase family.</text>
</comment>
<feature type="transit peptide" description="Mitochondrion" evidence="3">
    <location>
        <begin position="1"/>
        <end position="16"/>
    </location>
</feature>
<feature type="chain" id="PRO_0000250731" description="Probable arginine--tRNA ligase, mitochondrial">
    <location>
        <begin position="17"/>
        <end position="578"/>
    </location>
</feature>
<feature type="short sequence motif" description="'HIGH' region">
    <location>
        <begin position="133"/>
        <end position="144"/>
    </location>
</feature>
<feature type="binding site" evidence="1">
    <location>
        <begin position="133"/>
        <end position="135"/>
    </location>
    <ligand>
        <name>L-arginine</name>
        <dbReference type="ChEBI" id="CHEBI:32682"/>
    </ligand>
</feature>
<feature type="binding site" evidence="1">
    <location>
        <position position="144"/>
    </location>
    <ligand>
        <name>L-arginine</name>
        <dbReference type="ChEBI" id="CHEBI:32682"/>
    </ligand>
</feature>
<feature type="binding site" evidence="1">
    <location>
        <position position="322"/>
    </location>
    <ligand>
        <name>L-arginine</name>
        <dbReference type="ChEBI" id="CHEBI:32682"/>
    </ligand>
</feature>
<feature type="binding site" evidence="1">
    <location>
        <position position="326"/>
    </location>
    <ligand>
        <name>L-arginine</name>
        <dbReference type="ChEBI" id="CHEBI:32682"/>
    </ligand>
</feature>
<feature type="binding site" evidence="1">
    <location>
        <position position="350"/>
    </location>
    <ligand>
        <name>L-arginine</name>
        <dbReference type="ChEBI" id="CHEBI:32682"/>
    </ligand>
</feature>
<feature type="modified residue" description="N6-acetyllysine" evidence="2">
    <location>
        <position position="568"/>
    </location>
</feature>
<feature type="sequence variant" id="VAR_088506" description="In PCH6; uncertain significance; dbSNP:rs1776518694." evidence="8">
    <original>A</original>
    <variation>V</variation>
    <location>
        <position position="10"/>
    </location>
</feature>
<feature type="sequence variant" id="VAR_085046" description="Found in a patient with progressive myoclonus epilepsy and dementia; uncertain significance; dbSNP:rs761568260." evidence="9">
    <original>V</original>
    <variation>A</variation>
    <location>
        <position position="142"/>
    </location>
</feature>
<feature type="sequence variant" id="VAR_037800" description="In dbSNP:rs17850652." evidence="5">
    <original>K</original>
    <variation>R</variation>
    <location>
        <position position="291"/>
    </location>
</feature>
<feature type="sequence variant" id="VAR_085047" description="Found in a patient with progressive myoclonus epilepsy and dementia; uncertain significance; dbSNP:rs199835443." evidence="9">
    <location>
        <begin position="315"/>
        <end position="578"/>
    </location>
</feature>
<feature type="sequence variant" id="VAR_037801" description="In dbSNP:rs3757370." evidence="4">
    <original>I</original>
    <variation>V</variation>
    <location>
        <position position="331"/>
    </location>
</feature>
<feature type="sequence variant" id="VAR_085048" description="Found in a patient with late onset progressive myoclonus epilepsy; uncertain significance; dbSNP:rs34647222." evidence="9">
    <original>M</original>
    <variation>I</variation>
    <location>
        <position position="342"/>
    </location>
</feature>
<feature type="sequence variant" id="VAR_037802" description="In dbSNP:rs1108758.">
    <original>D</original>
    <variation>G</variation>
    <location>
        <position position="367"/>
    </location>
</feature>
<feature type="sequence variant" id="VAR_076278" description="Found in a patient with complex IV deficiency and non-lethal infantile mitochondrial disease; uncertain significance." evidence="7">
    <original>D</original>
    <variation>Y</variation>
    <location>
        <position position="436"/>
    </location>
</feature>
<feature type="sequence variant" id="VAR_076279" description="Found in a patient with complex IV deficiency and non-lethal infantile mitochondrial disease; uncertain significance; dbSNP:rs2128000762." evidence="7">
    <original>L</original>
    <variation>F</variation>
    <location>
        <position position="441"/>
    </location>
</feature>
<feature type="mutagenesis site" description="No effect on mitochondrial membrane localization." evidence="8">
    <original>I</original>
    <variation>V</variation>
    <location>
        <position position="9"/>
    </location>
</feature>
<feature type="mutagenesis site" description="No effect on mitochondrial membrane localization." evidence="8">
    <original>Q</original>
    <variation>R</variation>
    <location>
        <position position="12"/>
    </location>
</feature>
<feature type="mutagenesis site" description="No effect on mitochondrial membrane localization." evidence="8">
    <original>W</original>
    <variation>R</variation>
    <location>
        <position position="241"/>
    </location>
</feature>
<feature type="mutagenesis site" description="No effect on mitochondrial membrane localization." evidence="8">
    <original>R</original>
    <variation>Q</variation>
    <location>
        <position position="245"/>
    </location>
</feature>
<feature type="mutagenesis site" description="No effect on mitochondrial membrane localization." evidence="8">
    <original>R</original>
    <variation>H</variation>
    <location>
        <position position="258"/>
    </location>
</feature>
<feature type="mutagenesis site" description="No effect on mitochondrial membrane localization." evidence="8">
    <original>L</original>
    <variation>Q</variation>
    <location>
        <position position="283"/>
    </location>
</feature>
<feature type="mutagenesis site" description="No effect on mitochondrial membrane localization." evidence="8">
    <original>R</original>
    <variation>G</variation>
    <location>
        <position position="333"/>
    </location>
</feature>
<feature type="mutagenesis site" description="No effect on mitochondrial membrane localization." evidence="8">
    <original>M</original>
    <variation>V</variation>
    <location>
        <position position="342"/>
    </location>
</feature>
<feature type="mutagenesis site" description="No effect on mitochondrial membrane localization." evidence="8">
    <original>M</original>
    <variation>K</variation>
    <location>
        <position position="404"/>
    </location>
</feature>
<feature type="mutagenesis site" description="No effect on mitochondrial membrane localization." evidence="8">
    <original>R</original>
    <variation>H</variation>
    <location>
        <position position="469"/>
    </location>
</feature>
<feature type="mutagenesis site" description="No effect on mitochondrial membrane localization." evidence="8">
    <original>G</original>
    <variation>R</variation>
    <location>
        <position position="478"/>
    </location>
</feature>
<feature type="mutagenesis site" description="No effect on mitochondrial membrane localization." evidence="8">
    <original>H</original>
    <variation>Y</variation>
    <location>
        <position position="530"/>
    </location>
</feature>
<feature type="sequence conflict" description="In Ref. 1; BAB14608." evidence="10" ref="1">
    <original>S</original>
    <variation>P</variation>
    <location>
        <position position="48"/>
    </location>
</feature>
<feature type="sequence conflict" description="In Ref. 1; BAB14608." evidence="10" ref="1">
    <original>I</original>
    <variation>V</variation>
    <location>
        <position position="149"/>
    </location>
</feature>
<name>SYRM_HUMAN</name>
<dbReference type="EC" id="6.1.1.19" evidence="6"/>
<dbReference type="EMBL" id="AK023550">
    <property type="protein sequence ID" value="BAB14608.1"/>
    <property type="molecule type" value="mRNA"/>
</dbReference>
<dbReference type="EMBL" id="AK315669">
    <property type="protein sequence ID" value="BAG38034.1"/>
    <property type="molecule type" value="mRNA"/>
</dbReference>
<dbReference type="EMBL" id="AL451126">
    <property type="status" value="NOT_ANNOTATED_CDS"/>
    <property type="molecule type" value="Genomic_DNA"/>
</dbReference>
<dbReference type="EMBL" id="AL049697">
    <property type="status" value="NOT_ANNOTATED_CDS"/>
    <property type="molecule type" value="Genomic_DNA"/>
</dbReference>
<dbReference type="EMBL" id="CH471051">
    <property type="protein sequence ID" value="EAW48584.1"/>
    <property type="molecule type" value="Genomic_DNA"/>
</dbReference>
<dbReference type="EMBL" id="BC010420">
    <property type="protein sequence ID" value="AAH10420.1"/>
    <property type="molecule type" value="mRNA"/>
</dbReference>
<dbReference type="CCDS" id="CCDS5011.1"/>
<dbReference type="RefSeq" id="NP_064716.2">
    <property type="nucleotide sequence ID" value="NM_020320.5"/>
</dbReference>
<dbReference type="SMR" id="Q5T160"/>
<dbReference type="BioGRID" id="121334">
    <property type="interactions" value="135"/>
</dbReference>
<dbReference type="FunCoup" id="Q5T160">
    <property type="interactions" value="2129"/>
</dbReference>
<dbReference type="IntAct" id="Q5T160">
    <property type="interactions" value="66"/>
</dbReference>
<dbReference type="MINT" id="Q5T160"/>
<dbReference type="STRING" id="9606.ENSP00000358549"/>
<dbReference type="GlyGen" id="Q5T160">
    <property type="glycosylation" value="1 site, 1 O-linked glycan (1 site)"/>
</dbReference>
<dbReference type="iPTMnet" id="Q5T160"/>
<dbReference type="PhosphoSitePlus" id="Q5T160"/>
<dbReference type="SwissPalm" id="Q5T160"/>
<dbReference type="BioMuta" id="RARS2"/>
<dbReference type="DMDM" id="74744409"/>
<dbReference type="jPOST" id="Q5T160"/>
<dbReference type="MassIVE" id="Q5T160"/>
<dbReference type="PaxDb" id="9606-ENSP00000358549"/>
<dbReference type="PeptideAtlas" id="Q5T160"/>
<dbReference type="ProteomicsDB" id="64235"/>
<dbReference type="Pumba" id="Q5T160"/>
<dbReference type="Antibodypedia" id="31811">
    <property type="antibodies" value="73 antibodies from 20 providers"/>
</dbReference>
<dbReference type="DNASU" id="57038"/>
<dbReference type="Ensembl" id="ENST00000369536.10">
    <property type="protein sequence ID" value="ENSP00000358549.5"/>
    <property type="gene ID" value="ENSG00000146282.19"/>
</dbReference>
<dbReference type="GeneID" id="57038"/>
<dbReference type="KEGG" id="hsa:57038"/>
<dbReference type="MANE-Select" id="ENST00000369536.10">
    <property type="protein sequence ID" value="ENSP00000358549.5"/>
    <property type="RefSeq nucleotide sequence ID" value="NM_020320.5"/>
    <property type="RefSeq protein sequence ID" value="NP_064716.2"/>
</dbReference>
<dbReference type="UCSC" id="uc003pme.4">
    <property type="organism name" value="human"/>
</dbReference>
<dbReference type="AGR" id="HGNC:21406"/>
<dbReference type="CTD" id="57038"/>
<dbReference type="DisGeNET" id="57038"/>
<dbReference type="GeneCards" id="RARS2"/>
<dbReference type="HGNC" id="HGNC:21406">
    <property type="gene designation" value="RARS2"/>
</dbReference>
<dbReference type="HPA" id="ENSG00000146282">
    <property type="expression patterns" value="Low tissue specificity"/>
</dbReference>
<dbReference type="MalaCards" id="RARS2"/>
<dbReference type="MIM" id="611523">
    <property type="type" value="phenotype"/>
</dbReference>
<dbReference type="MIM" id="611524">
    <property type="type" value="gene"/>
</dbReference>
<dbReference type="neXtProt" id="NX_Q5T160"/>
<dbReference type="OpenTargets" id="ENSG00000146282"/>
<dbReference type="Orphanet" id="166073">
    <property type="disease" value="Pontocerebellar hypoplasia type 6"/>
</dbReference>
<dbReference type="PharmGKB" id="PA162400662"/>
<dbReference type="VEuPathDB" id="HostDB:ENSG00000146282"/>
<dbReference type="eggNOG" id="KOG1195">
    <property type="taxonomic scope" value="Eukaryota"/>
</dbReference>
<dbReference type="GeneTree" id="ENSGT00530000063407"/>
<dbReference type="HOGENOM" id="CLU_006406_6_2_1"/>
<dbReference type="InParanoid" id="Q5T160"/>
<dbReference type="OMA" id="YEFKWER"/>
<dbReference type="OrthoDB" id="68056at2759"/>
<dbReference type="PAN-GO" id="Q5T160">
    <property type="GO annotations" value="4 GO annotations based on evolutionary models"/>
</dbReference>
<dbReference type="PhylomeDB" id="Q5T160"/>
<dbReference type="TreeFam" id="TF300888"/>
<dbReference type="PathwayCommons" id="Q5T160"/>
<dbReference type="Reactome" id="R-HSA-379726">
    <property type="pathway name" value="Mitochondrial tRNA aminoacylation"/>
</dbReference>
<dbReference type="SignaLink" id="Q5T160"/>
<dbReference type="BioGRID-ORCS" id="57038">
    <property type="hits" value="457 hits in 1165 CRISPR screens"/>
</dbReference>
<dbReference type="ChiTaRS" id="RARS2">
    <property type="organism name" value="human"/>
</dbReference>
<dbReference type="GenomeRNAi" id="57038"/>
<dbReference type="Pharos" id="Q5T160">
    <property type="development level" value="Tbio"/>
</dbReference>
<dbReference type="PRO" id="PR:Q5T160"/>
<dbReference type="Proteomes" id="UP000005640">
    <property type="component" value="Chromosome 6"/>
</dbReference>
<dbReference type="RNAct" id="Q5T160">
    <property type="molecule type" value="protein"/>
</dbReference>
<dbReference type="Bgee" id="ENSG00000146282">
    <property type="expression patterns" value="Expressed in ileal mucosa and 181 other cell types or tissues"/>
</dbReference>
<dbReference type="ExpressionAtlas" id="Q5T160">
    <property type="expression patterns" value="baseline and differential"/>
</dbReference>
<dbReference type="GO" id="GO:0005759">
    <property type="term" value="C:mitochondrial matrix"/>
    <property type="evidence" value="ECO:0000304"/>
    <property type="project" value="Reactome"/>
</dbReference>
<dbReference type="GO" id="GO:0031966">
    <property type="term" value="C:mitochondrial membrane"/>
    <property type="evidence" value="ECO:0000315"/>
    <property type="project" value="UniProtKB"/>
</dbReference>
<dbReference type="GO" id="GO:0005739">
    <property type="term" value="C:mitochondrion"/>
    <property type="evidence" value="ECO:0006056"/>
    <property type="project" value="FlyBase"/>
</dbReference>
<dbReference type="GO" id="GO:0004814">
    <property type="term" value="F:arginine-tRNA ligase activity"/>
    <property type="evidence" value="ECO:0000315"/>
    <property type="project" value="UniProtKB"/>
</dbReference>
<dbReference type="GO" id="GO:0005524">
    <property type="term" value="F:ATP binding"/>
    <property type="evidence" value="ECO:0007669"/>
    <property type="project" value="UniProtKB-KW"/>
</dbReference>
<dbReference type="GO" id="GO:0003723">
    <property type="term" value="F:RNA binding"/>
    <property type="evidence" value="ECO:0007005"/>
    <property type="project" value="UniProtKB"/>
</dbReference>
<dbReference type="GO" id="GO:0006420">
    <property type="term" value="P:arginyl-tRNA aminoacylation"/>
    <property type="evidence" value="ECO:0000318"/>
    <property type="project" value="GO_Central"/>
</dbReference>
<dbReference type="GO" id="GO:0032543">
    <property type="term" value="P:mitochondrial translation"/>
    <property type="evidence" value="ECO:0000318"/>
    <property type="project" value="GO_Central"/>
</dbReference>
<dbReference type="GO" id="GO:0006418">
    <property type="term" value="P:tRNA aminoacylation for protein translation"/>
    <property type="evidence" value="ECO:0000304"/>
    <property type="project" value="Reactome"/>
</dbReference>
<dbReference type="CDD" id="cd00671">
    <property type="entry name" value="ArgRS_core"/>
    <property type="match status" value="1"/>
</dbReference>
<dbReference type="FunFam" id="1.10.730.10:FF:000006">
    <property type="entry name" value="Arginyl-tRNA synthetase 2, mitochondrial"/>
    <property type="match status" value="1"/>
</dbReference>
<dbReference type="FunFam" id="3.40.50.620:FF:000058">
    <property type="entry name" value="Mitochondrial arginyl-tRNA synthetase"/>
    <property type="match status" value="1"/>
</dbReference>
<dbReference type="FunFam" id="3.30.1360.70:FF:000004">
    <property type="entry name" value="Probable arginine--tRNA ligase, mitochondrial"/>
    <property type="match status" value="1"/>
</dbReference>
<dbReference type="Gene3D" id="3.30.1360.70">
    <property type="entry name" value="Arginyl tRNA synthetase N-terminal domain"/>
    <property type="match status" value="1"/>
</dbReference>
<dbReference type="Gene3D" id="3.40.50.620">
    <property type="entry name" value="HUPs"/>
    <property type="match status" value="1"/>
</dbReference>
<dbReference type="Gene3D" id="1.10.730.10">
    <property type="entry name" value="Isoleucyl-tRNA Synthetase, Domain 1"/>
    <property type="match status" value="1"/>
</dbReference>
<dbReference type="InterPro" id="IPR001412">
    <property type="entry name" value="aa-tRNA-synth_I_CS"/>
</dbReference>
<dbReference type="InterPro" id="IPR001278">
    <property type="entry name" value="Arg-tRNA-ligase"/>
</dbReference>
<dbReference type="InterPro" id="IPR036695">
    <property type="entry name" value="Arg-tRNA-synth_N_sf"/>
</dbReference>
<dbReference type="InterPro" id="IPR035684">
    <property type="entry name" value="ArgRS_core"/>
</dbReference>
<dbReference type="InterPro" id="IPR008909">
    <property type="entry name" value="DALR_anticod-bd"/>
</dbReference>
<dbReference type="InterPro" id="IPR014729">
    <property type="entry name" value="Rossmann-like_a/b/a_fold"/>
</dbReference>
<dbReference type="InterPro" id="IPR009080">
    <property type="entry name" value="tRNAsynth_Ia_anticodon-bd"/>
</dbReference>
<dbReference type="NCBIfam" id="TIGR00456">
    <property type="entry name" value="argS"/>
    <property type="match status" value="1"/>
</dbReference>
<dbReference type="PANTHER" id="PTHR11956:SF11">
    <property type="entry name" value="ARGININE--TRNA LIGASE, MITOCHONDRIAL-RELATED"/>
    <property type="match status" value="1"/>
</dbReference>
<dbReference type="PANTHER" id="PTHR11956">
    <property type="entry name" value="ARGINYL-TRNA SYNTHETASE"/>
    <property type="match status" value="1"/>
</dbReference>
<dbReference type="Pfam" id="PF05746">
    <property type="entry name" value="DALR_1"/>
    <property type="match status" value="1"/>
</dbReference>
<dbReference type="Pfam" id="PF00750">
    <property type="entry name" value="tRNA-synt_1d"/>
    <property type="match status" value="1"/>
</dbReference>
<dbReference type="PRINTS" id="PR01038">
    <property type="entry name" value="TRNASYNTHARG"/>
</dbReference>
<dbReference type="SMART" id="SM00836">
    <property type="entry name" value="DALR_1"/>
    <property type="match status" value="1"/>
</dbReference>
<dbReference type="SUPFAM" id="SSF47323">
    <property type="entry name" value="Anticodon-binding domain of a subclass of class I aminoacyl-tRNA synthetases"/>
    <property type="match status" value="1"/>
</dbReference>
<dbReference type="SUPFAM" id="SSF55190">
    <property type="entry name" value="Arginyl-tRNA synthetase (ArgRS), N-terminal 'additional' domain"/>
    <property type="match status" value="1"/>
</dbReference>
<dbReference type="SUPFAM" id="SSF52374">
    <property type="entry name" value="Nucleotidylyl transferase"/>
    <property type="match status" value="1"/>
</dbReference>
<dbReference type="PROSITE" id="PS00178">
    <property type="entry name" value="AA_TRNA_LIGASE_I"/>
    <property type="match status" value="1"/>
</dbReference>
<sequence>MACGFRRAIACQLSRVLNLPPENLITSISAVPISQKEEVADFQLSVDSLLEKDNDHSRPDIQVQAKRLAEKLRCDTVVSEISTGQRTVNFKINRELLTKTVLQQVIEDGSKYGLKSELFSGLPQKKIVVEFSSPNVAKKFHVGHLRSTIIGNFIANLKEALGHQVIRINYLGDWGMQFGLLGTGFQLFGYEEKLQSNPLQHLFEVYVQVNKEAADDKSVAKAAQEFFQRLELGDVQALSLWQKFRDLSIEEYIRVYKRLGVYFDEYSGESFYREKSQEVLKLLESKGLLLKTIKGTAVVDLSGNGDPSSICTVMRSDGTSLYATRDLAAAIDRMDKYNFDTMIYVTDKGQKKHFQQVFQMLKIMGYDWAERCQHVPFGVVQGMKTRRGDVTFLEDVLNEIQLRMLQNMASIKTTKELKNPQETAERVGLAALIIQDFKGLLLSDYKFSWDRVFQSRGDTGVFLQYTHARLHSLEETFGCGYLNDFNTACLQEPQSVSILQHLLRFDEVLYKSSQDFQPRHIVSYLLTLSHLAAVAHKTLQIKDSPPEVAGARLHLFKAVRSVLANGMKLLGITPVCRM</sequence>